<dbReference type="EMBL" id="AAFI02000040">
    <property type="protein sequence ID" value="EAL66902.1"/>
    <property type="molecule type" value="Genomic_DNA"/>
</dbReference>
<dbReference type="RefSeq" id="XP_640887.1">
    <property type="nucleotide sequence ID" value="XM_635795.1"/>
</dbReference>
<dbReference type="SMR" id="Q54U89"/>
<dbReference type="FunCoup" id="Q54U89">
    <property type="interactions" value="39"/>
</dbReference>
<dbReference type="STRING" id="44689.Q54U89"/>
<dbReference type="GlyCosmos" id="Q54U89">
    <property type="glycosylation" value="5 sites, No reported glycans"/>
</dbReference>
<dbReference type="GlyGen" id="Q54U89">
    <property type="glycosylation" value="5 sites"/>
</dbReference>
<dbReference type="PaxDb" id="44689-DDB0231989"/>
<dbReference type="ABCD" id="Q54U89">
    <property type="antibodies" value="2 sequenced antibodies"/>
</dbReference>
<dbReference type="EnsemblProtists" id="EAL66902">
    <property type="protein sequence ID" value="EAL66902"/>
    <property type="gene ID" value="DDB_G0281211"/>
</dbReference>
<dbReference type="GeneID" id="8622944"/>
<dbReference type="KEGG" id="ddi:DDB_G0281211"/>
<dbReference type="dictyBase" id="DDB_G0281211">
    <property type="gene designation" value="far1"/>
</dbReference>
<dbReference type="VEuPathDB" id="AmoebaDB:DDB_G0281211"/>
<dbReference type="eggNOG" id="ENOG502RFWT">
    <property type="taxonomic scope" value="Eukaryota"/>
</dbReference>
<dbReference type="HOGENOM" id="CLU_365408_0_0_1"/>
<dbReference type="InParanoid" id="Q54U89"/>
<dbReference type="OMA" id="YEYTQNC"/>
<dbReference type="PhylomeDB" id="Q54U89"/>
<dbReference type="PRO" id="PR:Q54U89"/>
<dbReference type="Proteomes" id="UP000002195">
    <property type="component" value="Chromosome 3"/>
</dbReference>
<dbReference type="GO" id="GO:0005886">
    <property type="term" value="C:plasma membrane"/>
    <property type="evidence" value="ECO:0000314"/>
    <property type="project" value="dictyBase"/>
</dbReference>
<dbReference type="GO" id="GO:0005542">
    <property type="term" value="F:folic acid binding"/>
    <property type="evidence" value="ECO:0000314"/>
    <property type="project" value="dictyBase"/>
</dbReference>
<dbReference type="GO" id="GO:0106063">
    <property type="term" value="F:G protein-coupled folate receptor activity"/>
    <property type="evidence" value="ECO:0000314"/>
    <property type="project" value="dictyBase"/>
</dbReference>
<dbReference type="GO" id="GO:0004930">
    <property type="term" value="F:G protein-coupled receptor activity"/>
    <property type="evidence" value="ECO:0000318"/>
    <property type="project" value="GO_Central"/>
</dbReference>
<dbReference type="GO" id="GO:0001530">
    <property type="term" value="F:lipopolysaccharide binding"/>
    <property type="evidence" value="ECO:0000314"/>
    <property type="project" value="dictyBase"/>
</dbReference>
<dbReference type="GO" id="GO:0019887">
    <property type="term" value="F:protein kinase regulator activity"/>
    <property type="evidence" value="ECO:0000314"/>
    <property type="project" value="dictyBase"/>
</dbReference>
<dbReference type="GO" id="GO:0043326">
    <property type="term" value="P:chemotaxis to folate"/>
    <property type="evidence" value="ECO:0000315"/>
    <property type="project" value="dictyBase"/>
</dbReference>
<dbReference type="GO" id="GO:0050829">
    <property type="term" value="P:defense response to Gram-negative bacterium"/>
    <property type="evidence" value="ECO:0000315"/>
    <property type="project" value="dictyBase"/>
</dbReference>
<dbReference type="GO" id="GO:0016045">
    <property type="term" value="P:detection of bacterium"/>
    <property type="evidence" value="ECO:0000315"/>
    <property type="project" value="dictyBase"/>
</dbReference>
<dbReference type="GO" id="GO:0007186">
    <property type="term" value="P:G protein-coupled receptor signaling pathway"/>
    <property type="evidence" value="ECO:0000314"/>
    <property type="project" value="dictyBase"/>
</dbReference>
<dbReference type="GO" id="GO:0006909">
    <property type="term" value="P:phagocytosis"/>
    <property type="evidence" value="ECO:0000315"/>
    <property type="project" value="dictyBase"/>
</dbReference>
<dbReference type="GO" id="GO:0006911">
    <property type="term" value="P:phagocytosis, engulfment"/>
    <property type="evidence" value="ECO:0000315"/>
    <property type="project" value="dictyBase"/>
</dbReference>
<dbReference type="GO" id="GO:0030838">
    <property type="term" value="P:positive regulation of actin filament polymerization"/>
    <property type="evidence" value="ECO:0000315"/>
    <property type="project" value="dictyBase"/>
</dbReference>
<dbReference type="GO" id="GO:0046579">
    <property type="term" value="P:positive regulation of Ras protein signal transduction"/>
    <property type="evidence" value="ECO:0000315"/>
    <property type="project" value="dictyBase"/>
</dbReference>
<dbReference type="GO" id="GO:0008104">
    <property type="term" value="P:protein localization"/>
    <property type="evidence" value="ECO:0000315"/>
    <property type="project" value="dictyBase"/>
</dbReference>
<dbReference type="GO" id="GO:1905301">
    <property type="term" value="P:regulation of macropinocytosis"/>
    <property type="evidence" value="ECO:0000315"/>
    <property type="project" value="dictyBase"/>
</dbReference>
<dbReference type="CDD" id="cd15047">
    <property type="entry name" value="7tmC_GABA-B-like"/>
    <property type="match status" value="1"/>
</dbReference>
<dbReference type="Gene3D" id="3.40.50.2300">
    <property type="match status" value="2"/>
</dbReference>
<dbReference type="InterPro" id="IPR017978">
    <property type="entry name" value="GPCR_3_C"/>
</dbReference>
<dbReference type="InterPro" id="IPR051530">
    <property type="entry name" value="mGluR/GABA-B-like"/>
</dbReference>
<dbReference type="InterPro" id="IPR003760">
    <property type="entry name" value="PnrA-like"/>
</dbReference>
<dbReference type="PANTHER" id="PTHR46924">
    <property type="entry name" value="METABOTROPIC GLUTAMATE RECEPTOR-LIKE PROTEIN C-RELATED-RELATED"/>
    <property type="match status" value="1"/>
</dbReference>
<dbReference type="PANTHER" id="PTHR46924:SF1">
    <property type="entry name" value="METABOTROPIC GLUTAMATE RECEPTOR-LIKE PROTEIN L"/>
    <property type="match status" value="1"/>
</dbReference>
<dbReference type="Pfam" id="PF00003">
    <property type="entry name" value="7tm_3"/>
    <property type="match status" value="1"/>
</dbReference>
<dbReference type="Pfam" id="PF02608">
    <property type="entry name" value="Bmp"/>
    <property type="match status" value="1"/>
</dbReference>
<dbReference type="PROSITE" id="PS50259">
    <property type="entry name" value="G_PROTEIN_RECEP_F3_4"/>
    <property type="match status" value="1"/>
</dbReference>
<feature type="signal peptide" evidence="1">
    <location>
        <begin position="1"/>
        <end position="24"/>
    </location>
</feature>
<feature type="chain" id="PRO_0000370355" description="Metabotropic glutamate receptor-like protein L">
    <location>
        <begin position="25"/>
        <end position="708"/>
    </location>
</feature>
<feature type="topological domain" description="Extracellular" evidence="1">
    <location>
        <begin position="25"/>
        <end position="370"/>
    </location>
</feature>
<feature type="transmembrane region" description="Helical; Name=1" evidence="1">
    <location>
        <begin position="371"/>
        <end position="391"/>
    </location>
</feature>
<feature type="topological domain" description="Cytoplasmic" evidence="1">
    <location>
        <begin position="392"/>
        <end position="401"/>
    </location>
</feature>
<feature type="transmembrane region" description="Helical; Name=2" evidence="1">
    <location>
        <begin position="402"/>
        <end position="422"/>
    </location>
</feature>
<feature type="topological domain" description="Extracellular" evidence="1">
    <location>
        <begin position="423"/>
        <end position="435"/>
    </location>
</feature>
<feature type="transmembrane region" description="Helical; Name=3" evidence="1">
    <location>
        <begin position="436"/>
        <end position="456"/>
    </location>
</feature>
<feature type="topological domain" description="Cytoplasmic" evidence="1">
    <location>
        <begin position="457"/>
        <end position="479"/>
    </location>
</feature>
<feature type="transmembrane region" description="Helical; Name=4" evidence="1">
    <location>
        <begin position="480"/>
        <end position="500"/>
    </location>
</feature>
<feature type="topological domain" description="Extracellular" evidence="1">
    <location>
        <begin position="501"/>
        <end position="531"/>
    </location>
</feature>
<feature type="transmembrane region" description="Helical; Name=5" evidence="1">
    <location>
        <begin position="532"/>
        <end position="552"/>
    </location>
</feature>
<feature type="topological domain" description="Cytoplasmic" evidence="1">
    <location>
        <begin position="553"/>
        <end position="568"/>
    </location>
</feature>
<feature type="transmembrane region" description="Helical; Name=6" evidence="1">
    <location>
        <begin position="569"/>
        <end position="589"/>
    </location>
</feature>
<feature type="topological domain" description="Extracellular" evidence="1">
    <location>
        <begin position="590"/>
        <end position="597"/>
    </location>
</feature>
<feature type="transmembrane region" description="Helical; Name=7" evidence="1">
    <location>
        <begin position="598"/>
        <end position="618"/>
    </location>
</feature>
<feature type="topological domain" description="Cytoplasmic" evidence="1">
    <location>
        <begin position="619"/>
        <end position="708"/>
    </location>
</feature>
<feature type="region of interest" description="Disordered" evidence="2">
    <location>
        <begin position="638"/>
        <end position="681"/>
    </location>
</feature>
<feature type="compositionally biased region" description="Polar residues" evidence="2">
    <location>
        <begin position="669"/>
        <end position="681"/>
    </location>
</feature>
<feature type="glycosylation site" description="N-linked (GlcNAc...) asparagine" evidence="1">
    <location>
        <position position="21"/>
    </location>
</feature>
<feature type="glycosylation site" description="N-linked (GlcNAc...) asparagine" evidence="1">
    <location>
        <position position="235"/>
    </location>
</feature>
<feature type="glycosylation site" description="N-linked (GlcNAc...) asparagine" evidence="1">
    <location>
        <position position="310"/>
    </location>
</feature>
<feature type="glycosylation site" description="N-linked (GlcNAc...) asparagine" evidence="1">
    <location>
        <position position="366"/>
    </location>
</feature>
<feature type="glycosylation site" description="N-linked (GlcNAc...) asparagine" evidence="1">
    <location>
        <position position="527"/>
    </location>
</feature>
<accession>Q54U89</accession>
<name>GRLL_DICDI</name>
<keyword id="KW-0297">G-protein coupled receptor</keyword>
<keyword id="KW-0325">Glycoprotein</keyword>
<keyword id="KW-0472">Membrane</keyword>
<keyword id="KW-0675">Receptor</keyword>
<keyword id="KW-1185">Reference proteome</keyword>
<keyword id="KW-0732">Signal</keyword>
<keyword id="KW-0807">Transducer</keyword>
<keyword id="KW-0812">Transmembrane</keyword>
<keyword id="KW-1133">Transmembrane helix</keyword>
<protein>
    <recommendedName>
        <fullName>Metabotropic glutamate receptor-like protein L</fullName>
    </recommendedName>
</protein>
<comment type="subcellular location">
    <subcellularLocation>
        <location evidence="5">Membrane</location>
        <topology evidence="5">Multi-pass membrane protein</topology>
    </subcellularLocation>
</comment>
<comment type="developmental stage">
    <text evidence="3">Increased levels found from the tight aggregation stage onward. Levels stayed high during late development. Clear expression at 24 hours when fruiting body formation is close to completion.</text>
</comment>
<comment type="induction">
    <text evidence="4">Down-regulated by Pseudomonas aeruginosa, PAO1 strain infection and up-regulated by Pseudomonas aeruginosa, PA14 strain infection.</text>
</comment>
<comment type="similarity">
    <text evidence="5">In the N-terminal section; belongs to the BMP lipoprotein family.</text>
</comment>
<comment type="similarity">
    <text evidence="5">In the C-terminal section; belongs to the G-protein coupled receptor 3 family. GABA-B receptor subfamily.</text>
</comment>
<proteinExistence type="evidence at transcript level"/>
<sequence length="708" mass="78003">MKLIIKNLILLLVSCLYFLSNVSCDQEVHMALLLEGQVDDLGINYEVNQGLAETEALIQRAAKVINDANSYDSTYDNIKSLLDQDNPYNLIITSSESQMSAALDIASDYEDTYFLIFGDMGDKKVPHSKVGTYYFNLVSPHFVLGFIAGGMGKSVGMVVPGPPTENYFTANAFYAGMKYYTSPAGAPNPSLSVVATSSYDDYDTATGAGRILLTKDIDICTQSQTDMTVANMFLNASKWAFGTNGFPQSNIYGNRIIQSVVHNFQVPFYEAATMVMKNTWKNGYNFFGDFNNNFFYLDYYSFLVDPLLKNQTEDLISTIKGGAKPYITNGLTYEKILEQTKLSTGITDLGYYAVPTTEVYTTGSINKTFMAVSILEMAICLIIGIIVIFFFSRNINIIYSTIPYCLTILLGASLIAVAIFLWNLRDLNTQICTSKIWMASLGYNVLIGFIIIKSSLIYFKFKEMVKSKNEKISPIPFGRIVLWFVPLLIIDCVLLIIYSTSGNPGKIDSLGLDGIGRYEYTQNCVNNLTGDIILYIILVFHGLQLLYGCVIAWKTRVIDLEEFIEAHDFATAIYLITFCSFIIVILMVGVTSTSNRNTIISACAIFSSFSCVLIIFGAKFWKIYKPVEDDGLPQIKLKPQKSYSGSGGSGNSSGSKSKKTSAHSSTSGVKSGTSAPTQTSQSAMASINIQNFVNPIEASSRAAAQNDN</sequence>
<gene>
    <name type="primary">far1</name>
    <name type="synonym">grlL</name>
    <name type="ORF">DDB_G0281211</name>
</gene>
<organism>
    <name type="scientific">Dictyostelium discoideum</name>
    <name type="common">Social amoeba</name>
    <dbReference type="NCBI Taxonomy" id="44689"/>
    <lineage>
        <taxon>Eukaryota</taxon>
        <taxon>Amoebozoa</taxon>
        <taxon>Evosea</taxon>
        <taxon>Eumycetozoa</taxon>
        <taxon>Dictyostelia</taxon>
        <taxon>Dictyosteliales</taxon>
        <taxon>Dictyosteliaceae</taxon>
        <taxon>Dictyostelium</taxon>
    </lineage>
</organism>
<reference key="1">
    <citation type="journal article" date="2005" name="Nature">
        <title>The genome of the social amoeba Dictyostelium discoideum.</title>
        <authorList>
            <person name="Eichinger L."/>
            <person name="Pachebat J.A."/>
            <person name="Gloeckner G."/>
            <person name="Rajandream M.A."/>
            <person name="Sucgang R."/>
            <person name="Berriman M."/>
            <person name="Song J."/>
            <person name="Olsen R."/>
            <person name="Szafranski K."/>
            <person name="Xu Q."/>
            <person name="Tunggal B."/>
            <person name="Kummerfeld S."/>
            <person name="Madera M."/>
            <person name="Konfortov B.A."/>
            <person name="Rivero F."/>
            <person name="Bankier A.T."/>
            <person name="Lehmann R."/>
            <person name="Hamlin N."/>
            <person name="Davies R."/>
            <person name="Gaudet P."/>
            <person name="Fey P."/>
            <person name="Pilcher K."/>
            <person name="Chen G."/>
            <person name="Saunders D."/>
            <person name="Sodergren E.J."/>
            <person name="Davis P."/>
            <person name="Kerhornou A."/>
            <person name="Nie X."/>
            <person name="Hall N."/>
            <person name="Anjard C."/>
            <person name="Hemphill L."/>
            <person name="Bason N."/>
            <person name="Farbrother P."/>
            <person name="Desany B."/>
            <person name="Just E."/>
            <person name="Morio T."/>
            <person name="Rost R."/>
            <person name="Churcher C.M."/>
            <person name="Cooper J."/>
            <person name="Haydock S."/>
            <person name="van Driessche N."/>
            <person name="Cronin A."/>
            <person name="Goodhead I."/>
            <person name="Muzny D.M."/>
            <person name="Mourier T."/>
            <person name="Pain A."/>
            <person name="Lu M."/>
            <person name="Harper D."/>
            <person name="Lindsay R."/>
            <person name="Hauser H."/>
            <person name="James K.D."/>
            <person name="Quiles M."/>
            <person name="Madan Babu M."/>
            <person name="Saito T."/>
            <person name="Buchrieser C."/>
            <person name="Wardroper A."/>
            <person name="Felder M."/>
            <person name="Thangavelu M."/>
            <person name="Johnson D."/>
            <person name="Knights A."/>
            <person name="Loulseged H."/>
            <person name="Mungall K.L."/>
            <person name="Oliver K."/>
            <person name="Price C."/>
            <person name="Quail M.A."/>
            <person name="Urushihara H."/>
            <person name="Hernandez J."/>
            <person name="Rabbinowitsch E."/>
            <person name="Steffen D."/>
            <person name="Sanders M."/>
            <person name="Ma J."/>
            <person name="Kohara Y."/>
            <person name="Sharp S."/>
            <person name="Simmonds M.N."/>
            <person name="Spiegler S."/>
            <person name="Tivey A."/>
            <person name="Sugano S."/>
            <person name="White B."/>
            <person name="Walker D."/>
            <person name="Woodward J.R."/>
            <person name="Winckler T."/>
            <person name="Tanaka Y."/>
            <person name="Shaulsky G."/>
            <person name="Schleicher M."/>
            <person name="Weinstock G.M."/>
            <person name="Rosenthal A."/>
            <person name="Cox E.C."/>
            <person name="Chisholm R.L."/>
            <person name="Gibbs R.A."/>
            <person name="Loomis W.F."/>
            <person name="Platzer M."/>
            <person name="Kay R.R."/>
            <person name="Williams J.G."/>
            <person name="Dear P.H."/>
            <person name="Noegel A.A."/>
            <person name="Barrell B.G."/>
            <person name="Kuspa A."/>
        </authorList>
    </citation>
    <scope>NUCLEOTIDE SEQUENCE [LARGE SCALE GENOMIC DNA]</scope>
    <source>
        <strain>AX4</strain>
    </source>
</reference>
<reference key="2">
    <citation type="journal article" date="2006" name="Eur. J. Cell Biol.">
        <title>The Dictyostelium repertoire of seven transmembrane domain receptors.</title>
        <authorList>
            <person name="Prabhu Y."/>
            <person name="Eichinger L."/>
        </authorList>
    </citation>
    <scope>NOMENCLATURE</scope>
</reference>
<reference key="3">
    <citation type="journal article" date="2007" name="BMC Dev. Biol.">
        <title>GrlJ, a Dictyostelium GABAB-like receptor with roles in post-aggregation development.</title>
        <authorList>
            <person name="Prabhu Y."/>
            <person name="Mueller R."/>
            <person name="Anjard C."/>
            <person name="Noegel A.A."/>
        </authorList>
    </citation>
    <scope>DEVELOPMENTAL STAGE</scope>
</reference>
<reference key="4">
    <citation type="journal article" date="2008" name="BMC Microbiol.">
        <title>Dictyostelium transcriptional responses to Pseudomonas aeruginosa: common and specific effects from PAO1 and PA14 strains.</title>
        <authorList>
            <person name="Carilla-Latorre S."/>
            <person name="Calvo-Garrido J."/>
            <person name="Bloomfield G."/>
            <person name="Skelton J."/>
            <person name="Kay R.R."/>
            <person name="Ivens A."/>
            <person name="Martinez J.L."/>
            <person name="Escalante R."/>
        </authorList>
    </citation>
    <scope>INDUCTION [LARGE SCALE ANALYSIS]</scope>
</reference>
<evidence type="ECO:0000255" key="1"/>
<evidence type="ECO:0000256" key="2">
    <source>
        <dbReference type="SAM" id="MobiDB-lite"/>
    </source>
</evidence>
<evidence type="ECO:0000269" key="3">
    <source>
    </source>
</evidence>
<evidence type="ECO:0000269" key="4">
    <source>
    </source>
</evidence>
<evidence type="ECO:0000305" key="5"/>